<reference key="1">
    <citation type="journal article" date="2000" name="Plant Cell">
        <title>The classical arabinogalactan protein gene family of Arabidopsis.</title>
        <authorList>
            <person name="Schultz C.J."/>
            <person name="Johnson K.L."/>
            <person name="Currie G."/>
            <person name="Bacic A."/>
        </authorList>
    </citation>
    <scope>NUCLEOTIDE SEQUENCE [MRNA]</scope>
    <scope>HYDROXYLATION AT PRO-31; PRO-33 AND PRO-35</scope>
    <scope>PROTEIN SEQUENCE OF 28-37</scope>
    <source>
        <strain>cv. Columbia</strain>
    </source>
</reference>
<reference key="2">
    <citation type="journal article" date="1999" name="Nature">
        <title>Sequence and analysis of chromosome 4 of the plant Arabidopsis thaliana.</title>
        <authorList>
            <person name="Mayer K.F.X."/>
            <person name="Schueller C."/>
            <person name="Wambutt R."/>
            <person name="Murphy G."/>
            <person name="Volckaert G."/>
            <person name="Pohl T."/>
            <person name="Duesterhoeft A."/>
            <person name="Stiekema W."/>
            <person name="Entian K.-D."/>
            <person name="Terryn N."/>
            <person name="Harris B."/>
            <person name="Ansorge W."/>
            <person name="Brandt P."/>
            <person name="Grivell L.A."/>
            <person name="Rieger M."/>
            <person name="Weichselgartner M."/>
            <person name="de Simone V."/>
            <person name="Obermaier B."/>
            <person name="Mache R."/>
            <person name="Mueller M."/>
            <person name="Kreis M."/>
            <person name="Delseny M."/>
            <person name="Puigdomenech P."/>
            <person name="Watson M."/>
            <person name="Schmidtheini T."/>
            <person name="Reichert B."/>
            <person name="Portetelle D."/>
            <person name="Perez-Alonso M."/>
            <person name="Boutry M."/>
            <person name="Bancroft I."/>
            <person name="Vos P."/>
            <person name="Hoheisel J."/>
            <person name="Zimmermann W."/>
            <person name="Wedler H."/>
            <person name="Ridley P."/>
            <person name="Langham S.-A."/>
            <person name="McCullagh B."/>
            <person name="Bilham L."/>
            <person name="Robben J."/>
            <person name="van der Schueren J."/>
            <person name="Grymonprez B."/>
            <person name="Chuang Y.-J."/>
            <person name="Vandenbussche F."/>
            <person name="Braeken M."/>
            <person name="Weltjens I."/>
            <person name="Voet M."/>
            <person name="Bastiaens I."/>
            <person name="Aert R."/>
            <person name="Defoor E."/>
            <person name="Weitzenegger T."/>
            <person name="Bothe G."/>
            <person name="Ramsperger U."/>
            <person name="Hilbert H."/>
            <person name="Braun M."/>
            <person name="Holzer E."/>
            <person name="Brandt A."/>
            <person name="Peters S."/>
            <person name="van Staveren M."/>
            <person name="Dirkse W."/>
            <person name="Mooijman P."/>
            <person name="Klein Lankhorst R."/>
            <person name="Rose M."/>
            <person name="Hauf J."/>
            <person name="Koetter P."/>
            <person name="Berneiser S."/>
            <person name="Hempel S."/>
            <person name="Feldpausch M."/>
            <person name="Lamberth S."/>
            <person name="Van den Daele H."/>
            <person name="De Keyser A."/>
            <person name="Buysshaert C."/>
            <person name="Gielen J."/>
            <person name="Villarroel R."/>
            <person name="De Clercq R."/>
            <person name="van Montagu M."/>
            <person name="Rogers J."/>
            <person name="Cronin A."/>
            <person name="Quail M.A."/>
            <person name="Bray-Allen S."/>
            <person name="Clark L."/>
            <person name="Doggett J."/>
            <person name="Hall S."/>
            <person name="Kay M."/>
            <person name="Lennard N."/>
            <person name="McLay K."/>
            <person name="Mayes R."/>
            <person name="Pettett A."/>
            <person name="Rajandream M.A."/>
            <person name="Lyne M."/>
            <person name="Benes V."/>
            <person name="Rechmann S."/>
            <person name="Borkova D."/>
            <person name="Bloecker H."/>
            <person name="Scharfe M."/>
            <person name="Grimm M."/>
            <person name="Loehnert T.-H."/>
            <person name="Dose S."/>
            <person name="de Haan M."/>
            <person name="Maarse A.C."/>
            <person name="Schaefer M."/>
            <person name="Mueller-Auer S."/>
            <person name="Gabel C."/>
            <person name="Fuchs M."/>
            <person name="Fartmann B."/>
            <person name="Granderath K."/>
            <person name="Dauner D."/>
            <person name="Herzl A."/>
            <person name="Neumann S."/>
            <person name="Argiriou A."/>
            <person name="Vitale D."/>
            <person name="Liguori R."/>
            <person name="Piravandi E."/>
            <person name="Massenet O."/>
            <person name="Quigley F."/>
            <person name="Clabauld G."/>
            <person name="Muendlein A."/>
            <person name="Felber R."/>
            <person name="Schnabl S."/>
            <person name="Hiller R."/>
            <person name="Schmidt W."/>
            <person name="Lecharny A."/>
            <person name="Aubourg S."/>
            <person name="Chefdor F."/>
            <person name="Cooke R."/>
            <person name="Berger C."/>
            <person name="Monfort A."/>
            <person name="Casacuberta E."/>
            <person name="Gibbons T."/>
            <person name="Weber N."/>
            <person name="Vandenbol M."/>
            <person name="Bargues M."/>
            <person name="Terol J."/>
            <person name="Torres A."/>
            <person name="Perez-Perez A."/>
            <person name="Purnelle B."/>
            <person name="Bent E."/>
            <person name="Johnson S."/>
            <person name="Tacon D."/>
            <person name="Jesse T."/>
            <person name="Heijnen L."/>
            <person name="Schwarz S."/>
            <person name="Scholler P."/>
            <person name="Heber S."/>
            <person name="Francs P."/>
            <person name="Bielke C."/>
            <person name="Frishman D."/>
            <person name="Haase D."/>
            <person name="Lemcke K."/>
            <person name="Mewes H.-W."/>
            <person name="Stocker S."/>
            <person name="Zaccaria P."/>
            <person name="Bevan M."/>
            <person name="Wilson R.K."/>
            <person name="de la Bastide M."/>
            <person name="Habermann K."/>
            <person name="Parnell L."/>
            <person name="Dedhia N."/>
            <person name="Gnoj L."/>
            <person name="Schutz K."/>
            <person name="Huang E."/>
            <person name="Spiegel L."/>
            <person name="Sekhon M."/>
            <person name="Murray J."/>
            <person name="Sheet P."/>
            <person name="Cordes M."/>
            <person name="Abu-Threideh J."/>
            <person name="Stoneking T."/>
            <person name="Kalicki J."/>
            <person name="Graves T."/>
            <person name="Harmon G."/>
            <person name="Edwards J."/>
            <person name="Latreille P."/>
            <person name="Courtney L."/>
            <person name="Cloud J."/>
            <person name="Abbott A."/>
            <person name="Scott K."/>
            <person name="Johnson D."/>
            <person name="Minx P."/>
            <person name="Bentley D."/>
            <person name="Fulton B."/>
            <person name="Miller N."/>
            <person name="Greco T."/>
            <person name="Kemp K."/>
            <person name="Kramer J."/>
            <person name="Fulton L."/>
            <person name="Mardis E."/>
            <person name="Dante M."/>
            <person name="Pepin K."/>
            <person name="Hillier L.W."/>
            <person name="Nelson J."/>
            <person name="Spieth J."/>
            <person name="Ryan E."/>
            <person name="Andrews S."/>
            <person name="Geisel C."/>
            <person name="Layman D."/>
            <person name="Du H."/>
            <person name="Ali J."/>
            <person name="Berghoff A."/>
            <person name="Jones K."/>
            <person name="Drone K."/>
            <person name="Cotton M."/>
            <person name="Joshu C."/>
            <person name="Antonoiu B."/>
            <person name="Zidanic M."/>
            <person name="Strong C."/>
            <person name="Sun H."/>
            <person name="Lamar B."/>
            <person name="Yordan C."/>
            <person name="Ma P."/>
            <person name="Zhong J."/>
            <person name="Preston R."/>
            <person name="Vil D."/>
            <person name="Shekher M."/>
            <person name="Matero A."/>
            <person name="Shah R."/>
            <person name="Swaby I.K."/>
            <person name="O'Shaughnessy A."/>
            <person name="Rodriguez M."/>
            <person name="Hoffman J."/>
            <person name="Till S."/>
            <person name="Granat S."/>
            <person name="Shohdy N."/>
            <person name="Hasegawa A."/>
            <person name="Hameed A."/>
            <person name="Lodhi M."/>
            <person name="Johnson A."/>
            <person name="Chen E."/>
            <person name="Marra M.A."/>
            <person name="Martienssen R."/>
            <person name="McCombie W.R."/>
        </authorList>
    </citation>
    <scope>NUCLEOTIDE SEQUENCE [LARGE SCALE GENOMIC DNA]</scope>
    <source>
        <strain>cv. Columbia</strain>
    </source>
</reference>
<reference key="3">
    <citation type="journal article" date="2017" name="Plant J.">
        <title>Araport11: a complete reannotation of the Arabidopsis thaliana reference genome.</title>
        <authorList>
            <person name="Cheng C.Y."/>
            <person name="Krishnakumar V."/>
            <person name="Chan A.P."/>
            <person name="Thibaud-Nissen F."/>
            <person name="Schobel S."/>
            <person name="Town C.D."/>
        </authorList>
    </citation>
    <scope>GENOME REANNOTATION</scope>
    <source>
        <strain>cv. Columbia</strain>
    </source>
</reference>
<reference key="4">
    <citation type="submission" date="2006-03" db="EMBL/GenBank/DDBJ databases">
        <title>Arabidopsis ORF clones.</title>
        <authorList>
            <person name="Kim C.J."/>
            <person name="Chen H."/>
            <person name="Shinn P."/>
            <person name="Ecker J.R."/>
        </authorList>
    </citation>
    <scope>NUCLEOTIDE SEQUENCE [LARGE SCALE MRNA]</scope>
    <source>
        <strain>cv. Columbia</strain>
    </source>
</reference>
<reference key="5">
    <citation type="journal article" date="2004" name="J. Biol. Chem.">
        <title>Post-translational modifications of arabinogalactan-peptides of Arabidopsis thaliana. Endoplasmic reticulum and glycosylphosphatidylinositol-anchor signal cleavage sites and hydroxylation of proline.</title>
        <authorList>
            <person name="Schultz C.J."/>
            <person name="Ferguson K.L."/>
            <person name="Lahnstein J."/>
            <person name="Bacic A."/>
        </authorList>
    </citation>
    <scope>PROTEIN SEQUENCE OF 28-37</scope>
    <scope>HYDROXYLATION AT PRO-31; PRO-33 AND PRO-35</scope>
    <scope>GLYCOSYLATION AT PRO-31; PRO-33 AND PRO-35</scope>
    <scope>GPI-ANCHOR AT SER-37</scope>
</reference>
<reference key="6">
    <citation type="journal article" date="2002" name="Plant Physiol.">
        <title>Using genomic resources to guide research directions. The arabinogalactan protein gene family as a test case.</title>
        <authorList>
            <person name="Schultz C.J."/>
            <person name="Rumsewicz M.P."/>
            <person name="Johnson K.L."/>
            <person name="Jones B.J."/>
            <person name="Gaspar Y.M."/>
            <person name="Bacic A."/>
        </authorList>
    </citation>
    <scope>GENE FAMILY</scope>
    <scope>NOMENCLATURE</scope>
</reference>
<feature type="signal peptide" evidence="1 2">
    <location>
        <begin position="1"/>
        <end position="27"/>
    </location>
</feature>
<feature type="peptide" id="PRO_0000269013" description="Arabinogalactan protein 13" evidence="1 2">
    <location>
        <begin position="28"/>
        <end position="37"/>
    </location>
</feature>
<feature type="propeptide" id="PRO_0000269014" description="Removed in mature form" evidence="5 6">
    <location>
        <begin position="38"/>
        <end position="59"/>
    </location>
</feature>
<feature type="modified residue" description="4-hydroxyproline" evidence="1 2">
    <location>
        <position position="31"/>
    </location>
</feature>
<feature type="modified residue" description="4-hydroxyproline" evidence="1 2">
    <location>
        <position position="33"/>
    </location>
</feature>
<feature type="modified residue" description="4-hydroxyproline" evidence="1 2">
    <location>
        <position position="35"/>
    </location>
</feature>
<feature type="lipid moiety-binding region" description="GPI-anchor amidated serine" evidence="2">
    <location>
        <position position="37"/>
    </location>
</feature>
<feature type="glycosylation site" description="O-linked (Ara...) hydroxyproline" evidence="6">
    <location>
        <position position="31"/>
    </location>
</feature>
<feature type="glycosylation site" description="O-linked (Ara...) hydroxyproline" evidence="6">
    <location>
        <position position="33"/>
    </location>
</feature>
<feature type="glycosylation site" description="O-linked (Ara...) hydroxyproline" evidence="6">
    <location>
        <position position="35"/>
    </location>
</feature>
<gene>
    <name evidence="3" type="primary">AGP13</name>
    <name type="ordered locus">At4g26320</name>
    <name type="ORF">T25K17.130</name>
</gene>
<accession>Q9STQ3</accession>
<organism>
    <name type="scientific">Arabidopsis thaliana</name>
    <name type="common">Mouse-ear cress</name>
    <dbReference type="NCBI Taxonomy" id="3702"/>
    <lineage>
        <taxon>Eukaryota</taxon>
        <taxon>Viridiplantae</taxon>
        <taxon>Streptophyta</taxon>
        <taxon>Embryophyta</taxon>
        <taxon>Tracheophyta</taxon>
        <taxon>Spermatophyta</taxon>
        <taxon>Magnoliopsida</taxon>
        <taxon>eudicotyledons</taxon>
        <taxon>Gunneridae</taxon>
        <taxon>Pentapetalae</taxon>
        <taxon>rosids</taxon>
        <taxon>malvids</taxon>
        <taxon>Brassicales</taxon>
        <taxon>Brassicaceae</taxon>
        <taxon>Camelineae</taxon>
        <taxon>Arabidopsis</taxon>
    </lineage>
</organism>
<protein>
    <recommendedName>
        <fullName evidence="3">Arabinogalactan protein 13</fullName>
        <shortName evidence="3">AtAGP13</shortName>
    </recommendedName>
    <alternativeName>
        <fullName evidence="3">Arabinogalactan peptide 13</fullName>
        <shortName evidence="3">AG-peptide 13</shortName>
    </alternativeName>
</protein>
<proteinExistence type="evidence at protein level"/>
<name>AGP13_ARATH</name>
<comment type="function">
    <text evidence="4">Proteoglycan that seems to be implicated in diverse developmental roles such as differentiation, cell-cell recognition, embryogenesis and programmed cell death.</text>
</comment>
<comment type="subcellular location">
    <subcellularLocation>
        <location evidence="4">Cell membrane</location>
        <topology evidence="2">Lipid-anchor</topology>
        <topology evidence="2">GPI-anchor</topology>
    </subcellularLocation>
</comment>
<comment type="PTM">
    <text evidence="1 2">Contains 4-hydroxyproline; hydroxylated on Pro-31, Pro-33 and Pro-35.</text>
</comment>
<comment type="PTM">
    <text evidence="6">O-glycosylated on hydroxyprolines; noncontiguous hydroxylproline residues are glycosylated with arabinogalactan.</text>
</comment>
<comment type="similarity">
    <text evidence="4">Belongs to the AG-peptide AGP family.</text>
</comment>
<sequence length="59" mass="6052">MEAMKMRLFVAVLVAAMAFSAVQQAAAVEAPAPSPTSDASLAIPAFFASVATLAFGFLF</sequence>
<dbReference type="EMBL" id="AF195894">
    <property type="protein sequence ID" value="AAG24281.1"/>
    <property type="molecule type" value="mRNA"/>
</dbReference>
<dbReference type="EMBL" id="AL049171">
    <property type="protein sequence ID" value="CAB38961.1"/>
    <property type="molecule type" value="Genomic_DNA"/>
</dbReference>
<dbReference type="EMBL" id="AL161565">
    <property type="protein sequence ID" value="CAB79487.1"/>
    <property type="molecule type" value="Genomic_DNA"/>
</dbReference>
<dbReference type="EMBL" id="CP002687">
    <property type="protein sequence ID" value="AEE85185.1"/>
    <property type="molecule type" value="Genomic_DNA"/>
</dbReference>
<dbReference type="EMBL" id="BT024797">
    <property type="protein sequence ID" value="ABD60680.1"/>
    <property type="molecule type" value="mRNA"/>
</dbReference>
<dbReference type="PIR" id="T06016">
    <property type="entry name" value="T06016"/>
</dbReference>
<dbReference type="RefSeq" id="NP_194362.1">
    <property type="nucleotide sequence ID" value="NM_118765.3"/>
</dbReference>
<dbReference type="STRING" id="3702.Q9STQ3"/>
<dbReference type="GlyCosmos" id="Q9STQ3">
    <property type="glycosylation" value="3 sites, No reported glycans"/>
</dbReference>
<dbReference type="PaxDb" id="3702-AT4G26320.1"/>
<dbReference type="EnsemblPlants" id="AT4G26320.1">
    <property type="protein sequence ID" value="AT4G26320.1"/>
    <property type="gene ID" value="AT4G26320"/>
</dbReference>
<dbReference type="GeneID" id="828738"/>
<dbReference type="Gramene" id="AT4G26320.1">
    <property type="protein sequence ID" value="AT4G26320.1"/>
    <property type="gene ID" value="AT4G26320"/>
</dbReference>
<dbReference type="KEGG" id="ath:AT4G26320"/>
<dbReference type="Araport" id="AT4G26320"/>
<dbReference type="TAIR" id="AT4G26320">
    <property type="gene designation" value="AGP13"/>
</dbReference>
<dbReference type="eggNOG" id="ENOG502R7SE">
    <property type="taxonomic scope" value="Eukaryota"/>
</dbReference>
<dbReference type="HOGENOM" id="CLU_183441_3_0_1"/>
<dbReference type="InParanoid" id="Q9STQ3"/>
<dbReference type="OMA" id="MLVIMMI"/>
<dbReference type="PRO" id="PR:Q9STQ3"/>
<dbReference type="Proteomes" id="UP000006548">
    <property type="component" value="Chromosome 4"/>
</dbReference>
<dbReference type="ExpressionAtlas" id="Q9STQ3">
    <property type="expression patterns" value="baseline and differential"/>
</dbReference>
<dbReference type="GO" id="GO:0005886">
    <property type="term" value="C:plasma membrane"/>
    <property type="evidence" value="ECO:0007669"/>
    <property type="project" value="UniProtKB-SubCell"/>
</dbReference>
<dbReference type="GO" id="GO:0098552">
    <property type="term" value="C:side of membrane"/>
    <property type="evidence" value="ECO:0007669"/>
    <property type="project" value="UniProtKB-KW"/>
</dbReference>
<dbReference type="InterPro" id="IPR039281">
    <property type="entry name" value="AGP3/12/13/14/21"/>
</dbReference>
<dbReference type="PANTHER" id="PTHR34114">
    <property type="entry name" value="ARABINOGALACTAN PEPTIDE 1"/>
    <property type="match status" value="1"/>
</dbReference>
<dbReference type="PANTHER" id="PTHR34114:SF11">
    <property type="entry name" value="ARABINOGALACTAN PROTEIN 13-RELATED"/>
    <property type="match status" value="1"/>
</dbReference>
<evidence type="ECO:0000269" key="1">
    <source>
    </source>
</evidence>
<evidence type="ECO:0000269" key="2">
    <source>
    </source>
</evidence>
<evidence type="ECO:0000303" key="3">
    <source>
    </source>
</evidence>
<evidence type="ECO:0000305" key="4"/>
<evidence type="ECO:0000305" key="5">
    <source>
    </source>
</evidence>
<evidence type="ECO:0000305" key="6">
    <source>
    </source>
</evidence>
<keyword id="KW-1003">Cell membrane</keyword>
<keyword id="KW-0903">Direct protein sequencing</keyword>
<keyword id="KW-0325">Glycoprotein</keyword>
<keyword id="KW-0336">GPI-anchor</keyword>
<keyword id="KW-0379">Hydroxylation</keyword>
<keyword id="KW-0449">Lipoprotein</keyword>
<keyword id="KW-0472">Membrane</keyword>
<keyword id="KW-0654">Proteoglycan</keyword>
<keyword id="KW-1185">Reference proteome</keyword>
<keyword id="KW-0732">Signal</keyword>